<gene>
    <name type="primary">actVB</name>
    <name type="ordered locus">SCO5092</name>
    <name type="ORF">SCBAC28G1.18</name>
</gene>
<protein>
    <recommendedName>
        <fullName>Actinorhodin polyketide dimerase</fullName>
        <ecNumber>1.-.-.-</ecNumber>
    </recommendedName>
    <alternativeName>
        <fullName>actI ORF6</fullName>
    </alternativeName>
</protein>
<proteinExistence type="predicted"/>
<accession>Q02058</accession>
<feature type="chain" id="PRO_0000079899" description="Actinorhodin polyketide dimerase">
    <location>
        <begin position="1"/>
        <end position="177"/>
    </location>
</feature>
<evidence type="ECO:0000305" key="1"/>
<dbReference type="EC" id="1.-.-.-"/>
<dbReference type="EMBL" id="X63449">
    <property type="protein sequence ID" value="CAA45048.1"/>
    <property type="molecule type" value="Genomic_DNA"/>
</dbReference>
<dbReference type="EMBL" id="AL939122">
    <property type="protein sequence ID" value="CAC44205.1"/>
    <property type="molecule type" value="Genomic_DNA"/>
</dbReference>
<dbReference type="PIR" id="S25845">
    <property type="entry name" value="S25845"/>
</dbReference>
<dbReference type="RefSeq" id="NP_629242.1">
    <property type="nucleotide sequence ID" value="NC_003888.3"/>
</dbReference>
<dbReference type="RefSeq" id="WP_003973886.1">
    <property type="nucleotide sequence ID" value="NZ_VNID01000008.1"/>
</dbReference>
<dbReference type="SMR" id="Q02058"/>
<dbReference type="STRING" id="100226.gene:17762741"/>
<dbReference type="PaxDb" id="100226-SCO5092"/>
<dbReference type="GeneID" id="91383936"/>
<dbReference type="KEGG" id="sco:SCO5092"/>
<dbReference type="PATRIC" id="fig|100226.15.peg.5172"/>
<dbReference type="eggNOG" id="COG1853">
    <property type="taxonomic scope" value="Bacteria"/>
</dbReference>
<dbReference type="HOGENOM" id="CLU_059021_1_4_11"/>
<dbReference type="InParanoid" id="Q02058"/>
<dbReference type="OrthoDB" id="3677205at2"/>
<dbReference type="PhylomeDB" id="Q02058"/>
<dbReference type="UniPathway" id="UPA00173"/>
<dbReference type="Proteomes" id="UP000001973">
    <property type="component" value="Chromosome"/>
</dbReference>
<dbReference type="GO" id="GO:0010181">
    <property type="term" value="F:FMN binding"/>
    <property type="evidence" value="ECO:0007669"/>
    <property type="project" value="InterPro"/>
</dbReference>
<dbReference type="GO" id="GO:0042602">
    <property type="term" value="F:riboflavin reductase (NADPH) activity"/>
    <property type="evidence" value="ECO:0000318"/>
    <property type="project" value="GO_Central"/>
</dbReference>
<dbReference type="GO" id="GO:0017000">
    <property type="term" value="P:antibiotic biosynthetic process"/>
    <property type="evidence" value="ECO:0007669"/>
    <property type="project" value="UniProtKB-KW"/>
</dbReference>
<dbReference type="GO" id="GO:0006208">
    <property type="term" value="P:pyrimidine nucleobase catabolic process"/>
    <property type="evidence" value="ECO:0000318"/>
    <property type="project" value="GO_Central"/>
</dbReference>
<dbReference type="FunFam" id="2.30.110.10:FF:000035">
    <property type="entry name" value="Flavin reductase ActVB"/>
    <property type="match status" value="1"/>
</dbReference>
<dbReference type="Gene3D" id="2.30.110.10">
    <property type="entry name" value="Electron Transport, Fmn-binding Protein, Chain A"/>
    <property type="match status" value="1"/>
</dbReference>
<dbReference type="InterPro" id="IPR002563">
    <property type="entry name" value="Flavin_Rdtase-like_dom"/>
</dbReference>
<dbReference type="InterPro" id="IPR050268">
    <property type="entry name" value="NADH-dep_flavin_reductase"/>
</dbReference>
<dbReference type="InterPro" id="IPR012349">
    <property type="entry name" value="Split_barrel_FMN-bd"/>
</dbReference>
<dbReference type="PANTHER" id="PTHR30466">
    <property type="entry name" value="FLAVIN REDUCTASE"/>
    <property type="match status" value="1"/>
</dbReference>
<dbReference type="PANTHER" id="PTHR30466:SF1">
    <property type="entry name" value="FMN REDUCTASE (NADH) RUTF"/>
    <property type="match status" value="1"/>
</dbReference>
<dbReference type="Pfam" id="PF01613">
    <property type="entry name" value="Flavin_Reduct"/>
    <property type="match status" value="1"/>
</dbReference>
<dbReference type="SMART" id="SM00903">
    <property type="entry name" value="Flavin_Reduct"/>
    <property type="match status" value="1"/>
</dbReference>
<dbReference type="SUPFAM" id="SSF50475">
    <property type="entry name" value="FMN-binding split barrel"/>
    <property type="match status" value="1"/>
</dbReference>
<name>DIM6_STRCO</name>
<reference key="1">
    <citation type="journal article" date="1992" name="J. Biol. Chem.">
        <title>Nucleotide sequence and deduced functions of a set of cotranscribed genes of Streptomyces coelicolor A3(2) including the polyketide synthase for the antibiotic actinorhodin.</title>
        <authorList>
            <person name="Fernandez-Moreno M.A."/>
            <person name="Martinez E."/>
            <person name="Boto L."/>
            <person name="Hopwood D.A."/>
            <person name="Malpartida F."/>
        </authorList>
    </citation>
    <scope>NUCLEOTIDE SEQUENCE [GENOMIC DNA]</scope>
    <source>
        <strain>ATCC BAA-471 / A3(2) / M145</strain>
    </source>
</reference>
<reference key="2">
    <citation type="journal article" date="2002" name="Nature">
        <title>Complete genome sequence of the model actinomycete Streptomyces coelicolor A3(2).</title>
        <authorList>
            <person name="Bentley S.D."/>
            <person name="Chater K.F."/>
            <person name="Cerdeno-Tarraga A.-M."/>
            <person name="Challis G.L."/>
            <person name="Thomson N.R."/>
            <person name="James K.D."/>
            <person name="Harris D.E."/>
            <person name="Quail M.A."/>
            <person name="Kieser H."/>
            <person name="Harper D."/>
            <person name="Bateman A."/>
            <person name="Brown S."/>
            <person name="Chandra G."/>
            <person name="Chen C.W."/>
            <person name="Collins M."/>
            <person name="Cronin A."/>
            <person name="Fraser A."/>
            <person name="Goble A."/>
            <person name="Hidalgo J."/>
            <person name="Hornsby T."/>
            <person name="Howarth S."/>
            <person name="Huang C.-H."/>
            <person name="Kieser T."/>
            <person name="Larke L."/>
            <person name="Murphy L.D."/>
            <person name="Oliver K."/>
            <person name="O'Neil S."/>
            <person name="Rabbinowitsch E."/>
            <person name="Rajandream M.A."/>
            <person name="Rutherford K.M."/>
            <person name="Rutter S."/>
            <person name="Seeger K."/>
            <person name="Saunders D."/>
            <person name="Sharp S."/>
            <person name="Squares R."/>
            <person name="Squares S."/>
            <person name="Taylor K."/>
            <person name="Warren T."/>
            <person name="Wietzorrek A."/>
            <person name="Woodward J.R."/>
            <person name="Barrell B.G."/>
            <person name="Parkhill J."/>
            <person name="Hopwood D.A."/>
        </authorList>
    </citation>
    <scope>NUCLEOTIDE SEQUENCE [LARGE SCALE GENOMIC DNA]</scope>
    <source>
        <strain>ATCC BAA-471 / A3(2) / M145</strain>
    </source>
</reference>
<organism>
    <name type="scientific">Streptomyces coelicolor (strain ATCC BAA-471 / A3(2) / M145)</name>
    <dbReference type="NCBI Taxonomy" id="100226"/>
    <lineage>
        <taxon>Bacteria</taxon>
        <taxon>Bacillati</taxon>
        <taxon>Actinomycetota</taxon>
        <taxon>Actinomycetes</taxon>
        <taxon>Kitasatosporales</taxon>
        <taxon>Streptomycetaceae</taxon>
        <taxon>Streptomyces</taxon>
        <taxon>Streptomyces albidoflavus group</taxon>
    </lineage>
</organism>
<sequence length="177" mass="18393">MAADQGMLRDAMARVPAGVALVTAHDRGGVPHGFTASSFVSVSMEPPLALVCLARTANSFPVFDSCGEFAVSVLREDHTDLAMRFARKSADKFAGGEFVRTARGATVLDGAVAVVECTVHERYPAGDHIILLGEVQSVHVEEKGVPAVYVDRRFAALCSAAGACPSATGRGVPAHAG</sequence>
<comment type="pathway">
    <text>Antibiotic biosynthesis; actinorhodin biosynthesis.</text>
</comment>
<comment type="similarity">
    <text evidence="1">To S.pristinaespiralis SnaC.</text>
</comment>
<keyword id="KW-0045">Antibiotic biosynthesis</keyword>
<keyword id="KW-0560">Oxidoreductase</keyword>
<keyword id="KW-1185">Reference proteome</keyword>